<sequence length="289" mass="31123">MVVTLDGEILQPGMPLLHADDLAAVRGDGVFETLLVRDGRACLVEAHLQRLTQSARLMDLPEPDLPRWRRAVEVATQRWVASTADEGALRLIYSRGREGGSAPTAYVMVSPVPARVIGARRDGVSAITLDRGLPADGGDAMPWLIASAKTLSYAVNMAVLRHAARQGAGDVIFVSTDGYVLEGPRSTVVIATDGDQGGGNPCLLTPPPWYPILRGTTQQALFEVARAKGYDCDYRALRVADLFDSQGIWLVSSMTLAARVHTLDGRRLPRTPIAEVFAELVDAAIVSDR</sequence>
<reference key="1">
    <citation type="journal article" date="1998" name="Nature">
        <title>Deciphering the biology of Mycobacterium tuberculosis from the complete genome sequence.</title>
        <authorList>
            <person name="Cole S.T."/>
            <person name="Brosch R."/>
            <person name="Parkhill J."/>
            <person name="Garnier T."/>
            <person name="Churcher C.M."/>
            <person name="Harris D.E."/>
            <person name="Gordon S.V."/>
            <person name="Eiglmeier K."/>
            <person name="Gas S."/>
            <person name="Barry C.E. III"/>
            <person name="Tekaia F."/>
            <person name="Badcock K."/>
            <person name="Basham D."/>
            <person name="Brown D."/>
            <person name="Chillingworth T."/>
            <person name="Connor R."/>
            <person name="Davies R.M."/>
            <person name="Devlin K."/>
            <person name="Feltwell T."/>
            <person name="Gentles S."/>
            <person name="Hamlin N."/>
            <person name="Holroyd S."/>
            <person name="Hornsby T."/>
            <person name="Jagels K."/>
            <person name="Krogh A."/>
            <person name="McLean J."/>
            <person name="Moule S."/>
            <person name="Murphy L.D."/>
            <person name="Oliver S."/>
            <person name="Osborne J."/>
            <person name="Quail M.A."/>
            <person name="Rajandream M.A."/>
            <person name="Rogers J."/>
            <person name="Rutter S."/>
            <person name="Seeger K."/>
            <person name="Skelton S."/>
            <person name="Squares S."/>
            <person name="Squares R."/>
            <person name="Sulston J.E."/>
            <person name="Taylor K."/>
            <person name="Whitehead S."/>
            <person name="Barrell B.G."/>
        </authorList>
    </citation>
    <scope>NUCLEOTIDE SEQUENCE [LARGE SCALE GENOMIC DNA]</scope>
    <source>
        <strain>ATCC 25618 / H37Rv</strain>
    </source>
</reference>
<reference key="2">
    <citation type="journal article" date="2011" name="Mol. Cell. Proteomics">
        <title>Proteogenomic analysis of Mycobacterium tuberculosis by high resolution mass spectrometry.</title>
        <authorList>
            <person name="Kelkar D.S."/>
            <person name="Kumar D."/>
            <person name="Kumar P."/>
            <person name="Balakrishnan L."/>
            <person name="Muthusamy B."/>
            <person name="Yadav A.K."/>
            <person name="Shrivastava P."/>
            <person name="Marimuthu A."/>
            <person name="Anand S."/>
            <person name="Sundaram H."/>
            <person name="Kingsbury R."/>
            <person name="Harsha H.C."/>
            <person name="Nair B."/>
            <person name="Prasad T.S."/>
            <person name="Chauhan D.S."/>
            <person name="Katoch K."/>
            <person name="Katoch V.M."/>
            <person name="Kumar P."/>
            <person name="Chaerkady R."/>
            <person name="Ramachandran S."/>
            <person name="Dash D."/>
            <person name="Pandey A."/>
        </authorList>
    </citation>
    <scope>IDENTIFICATION BY MASS SPECTROMETRY [LARGE SCALE ANALYSIS]</scope>
    <source>
        <strain>ATCC 25618 / H37Rv</strain>
    </source>
</reference>
<reference evidence="6 7" key="3">
    <citation type="journal article" date="2021" name="J. Exp. Med.">
        <title>Metabolic bifunctionality of Rv0812 couples folate and peptidoglycan biosynthesis in Mycobacterium tuberculosis.</title>
        <authorList>
            <person name="Black K.A."/>
            <person name="Duan L."/>
            <person name="Mandyoli L."/>
            <person name="Selbach B.P."/>
            <person name="Xu W."/>
            <person name="Ehrt S."/>
            <person name="Sacchettini J.C."/>
            <person name="Rhee K.Y."/>
        </authorList>
    </citation>
    <scope>X-RAY CRYSTALLOGRAPHY (2.30 ANGSTROMS) OF APOENZYME AND IN COMPLEXES WITH PYRIDOXAL-5'-PHOSPHATE; PYRIDOXAMINE-5'-PHOSPHATE AND 2-OXOGLUTARIC ACID</scope>
    <scope>FUNCTION</scope>
    <scope>CATALYTIC ACTIVITY</scope>
    <scope>COFACTOR</scope>
    <scope>BIOPHYSICOCHEMICAL PROPERTIES</scope>
    <scope>PATHWAY</scope>
    <scope>SUBUNIT</scope>
    <scope>DISRUPTION PHENOTYPE</scope>
    <scope>MUTAGENESIS OF ARG-26</scope>
    <source>
        <strain>H37Rv</strain>
    </source>
</reference>
<proteinExistence type="evidence at protein level"/>
<evidence type="ECO:0000269" key="1">
    <source>
    </source>
</evidence>
<evidence type="ECO:0000303" key="2">
    <source>
    </source>
</evidence>
<evidence type="ECO:0000305" key="3"/>
<evidence type="ECO:0000305" key="4">
    <source>
    </source>
</evidence>
<evidence type="ECO:0000312" key="5">
    <source>
        <dbReference type="EMBL" id="CCP43560.1"/>
    </source>
</evidence>
<evidence type="ECO:0007744" key="6">
    <source>
        <dbReference type="PDB" id="6Q1Q"/>
    </source>
</evidence>
<evidence type="ECO:0007744" key="7">
    <source>
        <dbReference type="PDB" id="6Q1R"/>
    </source>
</evidence>
<evidence type="ECO:0007744" key="8">
    <source>
        <dbReference type="PDB" id="6Q1S"/>
    </source>
</evidence>
<evidence type="ECO:0007829" key="9">
    <source>
        <dbReference type="PDB" id="6Q1S"/>
    </source>
</evidence>
<comment type="function">
    <text evidence="1">Bifunctional enzyme that catalyzes two enzymatic reactions in biochemically unrelated pathways: acts as an aminodeoxychorismate (ADC) lyase (ADCL) in folate biosynthesis, converting 4-amino-4-deoxychorismate (ADC) to 4-aminobenzoate (PABA), and as a D-amino acid transaminase (DAAT) in peptidoglycan (PG) biosynthesis (PubMed:33950161). DAAT activity is strictly restricted to D-alanine and D-glutamate (PubMed:33950161). May function as a metabolic toggle that alternates between ADCL and DAAT activity, prioritizing the former over the latter in response to substrate accumulation (PubMed:33950161). Bifunctionality of this enzyme provides a failsafe mechanism for a metabolic coupling between nucleic acid and cell wall biosynthesis that appears to ensure prioritization of PABA production over D-alanine/D-glutamate biosynthesis (PubMed:33950161).</text>
</comment>
<comment type="catalytic activity">
    <reaction evidence="1">
        <text>4-amino-4-deoxychorismate = 4-aminobenzoate + pyruvate + H(+)</text>
        <dbReference type="Rhea" id="RHEA:16201"/>
        <dbReference type="ChEBI" id="CHEBI:15361"/>
        <dbReference type="ChEBI" id="CHEBI:15378"/>
        <dbReference type="ChEBI" id="CHEBI:17836"/>
        <dbReference type="ChEBI" id="CHEBI:58406"/>
        <dbReference type="EC" id="4.1.3.38"/>
    </reaction>
</comment>
<comment type="catalytic activity">
    <reaction evidence="1">
        <text>D-alanine + 2-oxoglutarate = D-glutamate + pyruvate</text>
        <dbReference type="Rhea" id="RHEA:15869"/>
        <dbReference type="ChEBI" id="CHEBI:15361"/>
        <dbReference type="ChEBI" id="CHEBI:16810"/>
        <dbReference type="ChEBI" id="CHEBI:29986"/>
        <dbReference type="ChEBI" id="CHEBI:57416"/>
        <dbReference type="EC" id="2.6.1.21"/>
    </reaction>
</comment>
<comment type="cofactor">
    <cofactor evidence="1">
        <name>pyridoxal 5'-phosphate</name>
        <dbReference type="ChEBI" id="CHEBI:597326"/>
    </cofactor>
</comment>
<comment type="biophysicochemical properties">
    <kinetics>
        <KM evidence="1">0.4 mM for aminodeoxychorismate</KM>
        <KM evidence="1">7.3 mM for D-alanine</KM>
        <KM evidence="1">0.24 mM for D-glutamate</KM>
        <text evidence="1">kcat is 1.9 sec(-1) with aminodeoxychorismate as substrate. kcat is 1.46 sec(-1) with D-alanine as substrate. kcat is 0.25 sec(-1) with D-glutamate as substrate.</text>
    </kinetics>
</comment>
<comment type="pathway">
    <text evidence="4">Cofactor biosynthesis; tetrahydrofolate biosynthesis; 4-aminobenzoate from chorismate: step 2/2.</text>
</comment>
<comment type="pathway">
    <text evidence="4">Cell wall biogenesis; peptidoglycan biosynthesis.</text>
</comment>
<comment type="subunit">
    <text evidence="1">Homodimer.</text>
</comment>
<comment type="disruption phenotype">
    <text evidence="1">Deletion mutant exhibits a growth defect in liquid culture (PubMed:33950161). Mutant is significantly impaired for folate biosynthesis and exhibits minor defects in D-amino acid metabolism (PubMed:33950161). It shows a marked and selective accumulation of ADC, while the levels of PABA and downstream intermediates of folate biosynthesis are markedly depleted (PubMed:33950161). It also exhibits a selective and genetically complementable defect in D-glutamate pools, but not D-alanine pools (PubMed:33950161).</text>
</comment>
<comment type="similarity">
    <text evidence="3">Belongs to the class-IV pyridoxal-phosphate-dependent aminotransferase family.</text>
</comment>
<organism>
    <name type="scientific">Mycobacterium tuberculosis (strain ATCC 25618 / H37Rv)</name>
    <dbReference type="NCBI Taxonomy" id="83332"/>
    <lineage>
        <taxon>Bacteria</taxon>
        <taxon>Bacillati</taxon>
        <taxon>Actinomycetota</taxon>
        <taxon>Actinomycetes</taxon>
        <taxon>Mycobacteriales</taxon>
        <taxon>Mycobacteriaceae</taxon>
        <taxon>Mycobacterium</taxon>
        <taxon>Mycobacterium tuberculosis complex</taxon>
    </lineage>
</organism>
<name>BALDT_MYCTU</name>
<protein>
    <recommendedName>
        <fullName evidence="2">Bifunctional aminodeoxychorismate lyase / D-amino acid transaminase</fullName>
        <shortName evidence="2">Bifunctional ADCL/DAAT</shortName>
        <ecNumber evidence="1">2.6.1.21</ecNumber>
        <ecNumber evidence="1">4.1.3.38</ecNumber>
    </recommendedName>
</protein>
<feature type="chain" id="PRO_0000458669" description="Bifunctional aminodeoxychorismate lyase / D-amino acid transaminase">
    <location>
        <begin position="1"/>
        <end position="289"/>
    </location>
</feature>
<feature type="binding site" evidence="1 7 8">
    <location>
        <position position="50"/>
    </location>
    <ligand>
        <name>pyridoxal 5'-phosphate</name>
        <dbReference type="ChEBI" id="CHEBI:597326"/>
    </ligand>
</feature>
<feature type="binding site" evidence="1 7 8">
    <location>
        <position position="153"/>
    </location>
    <ligand>
        <name>pyridoxal 5'-phosphate</name>
        <dbReference type="ChEBI" id="CHEBI:597326"/>
    </ligand>
</feature>
<feature type="binding site" evidence="1 7 8">
    <location>
        <position position="216"/>
    </location>
    <ligand>
        <name>pyridoxal 5'-phosphate</name>
        <dbReference type="ChEBI" id="CHEBI:597326"/>
    </ligand>
</feature>
<feature type="binding site" evidence="1 7 8">
    <location>
        <position position="217"/>
    </location>
    <ligand>
        <name>pyridoxal 5'-phosphate</name>
        <dbReference type="ChEBI" id="CHEBI:597326"/>
    </ligand>
</feature>
<feature type="binding site" evidence="1 8">
    <location>
        <position position="252"/>
    </location>
    <ligand>
        <name>2-oxoglutarate</name>
        <dbReference type="ChEBI" id="CHEBI:16810"/>
    </ligand>
</feature>
<feature type="binding site" evidence="1 7 8">
    <location>
        <position position="253"/>
    </location>
    <ligand>
        <name>pyridoxal 5'-phosphate</name>
        <dbReference type="ChEBI" id="CHEBI:597326"/>
    </ligand>
</feature>
<feature type="binding site" evidence="1 8">
    <location>
        <position position="254"/>
    </location>
    <ligand>
        <name>2-oxoglutarate</name>
        <dbReference type="ChEBI" id="CHEBI:16810"/>
    </ligand>
</feature>
<feature type="binding site" evidence="1 8">
    <location>
        <position position="255"/>
    </location>
    <ligand>
        <name>2-oxoglutarate</name>
        <dbReference type="ChEBI" id="CHEBI:16810"/>
    </ligand>
</feature>
<feature type="site" description="Important for dual ACDL/DAAT activities" evidence="4">
    <location>
        <position position="26"/>
    </location>
</feature>
<feature type="modified residue" description="N6-(pyridoxal phosphate)lysine" evidence="1 7">
    <location>
        <position position="149"/>
    </location>
</feature>
<feature type="mutagenesis site" description="Decreases kcat of both reactions." evidence="1">
    <original>R</original>
    <variation>A</variation>
    <location>
        <position position="26"/>
    </location>
</feature>
<feature type="strand" evidence="9">
    <location>
        <begin position="1"/>
        <end position="4"/>
    </location>
</feature>
<feature type="helix" evidence="9">
    <location>
        <begin position="22"/>
        <end position="25"/>
    </location>
</feature>
<feature type="strand" evidence="9">
    <location>
        <begin position="29"/>
        <end position="37"/>
    </location>
</feature>
<feature type="strand" evidence="9">
    <location>
        <begin position="40"/>
        <end position="43"/>
    </location>
</feature>
<feature type="helix" evidence="9">
    <location>
        <begin position="44"/>
        <end position="57"/>
    </location>
</feature>
<feature type="helix" evidence="9">
    <location>
        <begin position="65"/>
        <end position="82"/>
    </location>
</feature>
<feature type="strand" evidence="9">
    <location>
        <begin position="87"/>
        <end position="94"/>
    </location>
</feature>
<feature type="strand" evidence="9">
    <location>
        <begin position="104"/>
        <end position="111"/>
    </location>
</feature>
<feature type="helix" evidence="9">
    <location>
        <begin position="114"/>
        <end position="121"/>
    </location>
</feature>
<feature type="strand" evidence="9">
    <location>
        <begin position="124"/>
        <end position="130"/>
    </location>
</feature>
<feature type="helix" evidence="9">
    <location>
        <begin position="137"/>
        <end position="140"/>
    </location>
</feature>
<feature type="helix" evidence="9">
    <location>
        <begin position="142"/>
        <end position="144"/>
    </location>
</feature>
<feature type="helix" evidence="9">
    <location>
        <begin position="154"/>
        <end position="164"/>
    </location>
</feature>
<feature type="turn" evidence="9">
    <location>
        <begin position="165"/>
        <end position="167"/>
    </location>
</feature>
<feature type="strand" evidence="9">
    <location>
        <begin position="169"/>
        <end position="174"/>
    </location>
</feature>
<feature type="strand" evidence="9">
    <location>
        <begin position="178"/>
        <end position="180"/>
    </location>
</feature>
<feature type="strand" evidence="9">
    <location>
        <begin position="184"/>
        <end position="192"/>
    </location>
</feature>
<feature type="strand" evidence="9">
    <location>
        <begin position="202"/>
        <end position="205"/>
    </location>
</feature>
<feature type="turn" evidence="9">
    <location>
        <begin position="208"/>
        <end position="211"/>
    </location>
</feature>
<feature type="helix" evidence="9">
    <location>
        <begin position="216"/>
        <end position="226"/>
    </location>
</feature>
<feature type="turn" evidence="9">
    <location>
        <begin position="227"/>
        <end position="229"/>
    </location>
</feature>
<feature type="strand" evidence="9">
    <location>
        <begin position="231"/>
        <end position="234"/>
    </location>
</feature>
<feature type="helix" evidence="9">
    <location>
        <begin position="239"/>
        <end position="243"/>
    </location>
</feature>
<feature type="strand" evidence="9">
    <location>
        <begin position="245"/>
        <end position="252"/>
    </location>
</feature>
<feature type="turn" evidence="9">
    <location>
        <begin position="253"/>
        <end position="255"/>
    </location>
</feature>
<feature type="strand" evidence="9">
    <location>
        <begin position="256"/>
        <end position="263"/>
    </location>
</feature>
<feature type="helix" evidence="9">
    <location>
        <begin position="272"/>
        <end position="284"/>
    </location>
</feature>
<feature type="turn" evidence="9">
    <location>
        <begin position="285"/>
        <end position="288"/>
    </location>
</feature>
<gene>
    <name evidence="5" type="ordered locus">Rv0812</name>
</gene>
<dbReference type="EC" id="2.6.1.21" evidence="1"/>
<dbReference type="EC" id="4.1.3.38" evidence="1"/>
<dbReference type="EMBL" id="AL123456">
    <property type="protein sequence ID" value="CCP43560.1"/>
    <property type="molecule type" value="Genomic_DNA"/>
</dbReference>
<dbReference type="RefSeq" id="WP_003916726.1">
    <property type="nucleotide sequence ID" value="NZ_NVQJ01000064.1"/>
</dbReference>
<dbReference type="PDB" id="6Q1Q">
    <property type="method" value="X-ray"/>
    <property type="resolution" value="2.40 A"/>
    <property type="chains" value="A/B=1-289"/>
</dbReference>
<dbReference type="PDB" id="6Q1R">
    <property type="method" value="X-ray"/>
    <property type="resolution" value="2.70 A"/>
    <property type="chains" value="A/B/C/D=1-289"/>
</dbReference>
<dbReference type="PDB" id="6Q1S">
    <property type="method" value="X-ray"/>
    <property type="resolution" value="2.30 A"/>
    <property type="chains" value="A/B/C/D=1-289"/>
</dbReference>
<dbReference type="PDBsum" id="6Q1Q"/>
<dbReference type="PDBsum" id="6Q1R"/>
<dbReference type="PDBsum" id="6Q1S"/>
<dbReference type="SMR" id="Q79FW0"/>
<dbReference type="FunCoup" id="Q79FW0">
    <property type="interactions" value="253"/>
</dbReference>
<dbReference type="STRING" id="83332.Rv0812"/>
<dbReference type="PaxDb" id="83332-Rv0812"/>
<dbReference type="DNASU" id="885397"/>
<dbReference type="GeneID" id="885397"/>
<dbReference type="KEGG" id="mtu:Rv0812"/>
<dbReference type="KEGG" id="mtv:RVBD_0812"/>
<dbReference type="PATRIC" id="fig|83332.111.peg.899"/>
<dbReference type="TubercuList" id="Rv0812"/>
<dbReference type="eggNOG" id="COG0115">
    <property type="taxonomic scope" value="Bacteria"/>
</dbReference>
<dbReference type="InParanoid" id="Q79FW0"/>
<dbReference type="OrthoDB" id="3199344at2"/>
<dbReference type="PhylomeDB" id="Q79FW0"/>
<dbReference type="UniPathway" id="UPA00077">
    <property type="reaction ID" value="UER00150"/>
</dbReference>
<dbReference type="UniPathway" id="UPA00219"/>
<dbReference type="Proteomes" id="UP000001584">
    <property type="component" value="Chromosome"/>
</dbReference>
<dbReference type="GO" id="GO:0005829">
    <property type="term" value="C:cytosol"/>
    <property type="evidence" value="ECO:0000318"/>
    <property type="project" value="GO_Central"/>
</dbReference>
<dbReference type="GO" id="GO:0005886">
    <property type="term" value="C:plasma membrane"/>
    <property type="evidence" value="ECO:0007005"/>
    <property type="project" value="MTBBASE"/>
</dbReference>
<dbReference type="GO" id="GO:0008696">
    <property type="term" value="F:4-amino-4-deoxychorismate lyase activity"/>
    <property type="evidence" value="ECO:0007669"/>
    <property type="project" value="InterPro"/>
</dbReference>
<dbReference type="GO" id="GO:0030170">
    <property type="term" value="F:pyridoxal phosphate binding"/>
    <property type="evidence" value="ECO:0007669"/>
    <property type="project" value="InterPro"/>
</dbReference>
<dbReference type="GO" id="GO:0008483">
    <property type="term" value="F:transaminase activity"/>
    <property type="evidence" value="ECO:0007669"/>
    <property type="project" value="UniProtKB-KW"/>
</dbReference>
<dbReference type="GO" id="GO:0019752">
    <property type="term" value="P:carboxylic acid metabolic process"/>
    <property type="evidence" value="ECO:0000318"/>
    <property type="project" value="GO_Central"/>
</dbReference>
<dbReference type="GO" id="GO:0046656">
    <property type="term" value="P:folic acid biosynthetic process"/>
    <property type="evidence" value="ECO:0007669"/>
    <property type="project" value="UniProtKB-KW"/>
</dbReference>
<dbReference type="GO" id="GO:0009252">
    <property type="term" value="P:peptidoglycan biosynthetic process"/>
    <property type="evidence" value="ECO:0007669"/>
    <property type="project" value="UniProtKB-UniPathway"/>
</dbReference>
<dbReference type="GO" id="GO:0008360">
    <property type="term" value="P:regulation of cell shape"/>
    <property type="evidence" value="ECO:0007669"/>
    <property type="project" value="UniProtKB-KW"/>
</dbReference>
<dbReference type="GO" id="GO:0046654">
    <property type="term" value="P:tetrahydrofolate biosynthetic process"/>
    <property type="evidence" value="ECO:0007669"/>
    <property type="project" value="UniProtKB-UniPathway"/>
</dbReference>
<dbReference type="CDD" id="cd01559">
    <property type="entry name" value="ADCL_like"/>
    <property type="match status" value="1"/>
</dbReference>
<dbReference type="FunFam" id="3.20.10.10:FF:000034">
    <property type="entry name" value="4-amino-4-deoxychorismate lyase"/>
    <property type="match status" value="1"/>
</dbReference>
<dbReference type="Gene3D" id="3.30.470.10">
    <property type="match status" value="1"/>
</dbReference>
<dbReference type="Gene3D" id="3.20.10.10">
    <property type="entry name" value="D-amino Acid Aminotransferase, subunit A, domain 2"/>
    <property type="match status" value="1"/>
</dbReference>
<dbReference type="InterPro" id="IPR017824">
    <property type="entry name" value="Aminodeoxychorismate_lyase_IV"/>
</dbReference>
<dbReference type="InterPro" id="IPR001544">
    <property type="entry name" value="Aminotrans_IV"/>
</dbReference>
<dbReference type="InterPro" id="IPR036038">
    <property type="entry name" value="Aminotransferase-like"/>
</dbReference>
<dbReference type="InterPro" id="IPR043132">
    <property type="entry name" value="BCAT-like_C"/>
</dbReference>
<dbReference type="InterPro" id="IPR043131">
    <property type="entry name" value="BCAT-like_N"/>
</dbReference>
<dbReference type="InterPro" id="IPR050571">
    <property type="entry name" value="Class-IV_PLP-Dep_Aminotrnsfr"/>
</dbReference>
<dbReference type="NCBIfam" id="NF005886">
    <property type="entry name" value="PRK07849.1-1"/>
    <property type="match status" value="1"/>
</dbReference>
<dbReference type="NCBIfam" id="NF005887">
    <property type="entry name" value="PRK07849.1-2"/>
    <property type="match status" value="1"/>
</dbReference>
<dbReference type="PANTHER" id="PTHR42743">
    <property type="entry name" value="AMINO-ACID AMINOTRANSFERASE"/>
    <property type="match status" value="1"/>
</dbReference>
<dbReference type="PANTHER" id="PTHR42743:SF11">
    <property type="entry name" value="AMINODEOXYCHORISMATE LYASE"/>
    <property type="match status" value="1"/>
</dbReference>
<dbReference type="Pfam" id="PF01063">
    <property type="entry name" value="Aminotran_4"/>
    <property type="match status" value="1"/>
</dbReference>
<dbReference type="SUPFAM" id="SSF56752">
    <property type="entry name" value="D-aminoacid aminotransferase-like PLP-dependent enzymes"/>
    <property type="match status" value="1"/>
</dbReference>
<keyword id="KW-0002">3D-structure</keyword>
<keyword id="KW-0032">Aminotransferase</keyword>
<keyword id="KW-0133">Cell shape</keyword>
<keyword id="KW-0289">Folate biosynthesis</keyword>
<keyword id="KW-0456">Lyase</keyword>
<keyword id="KW-0573">Peptidoglycan synthesis</keyword>
<keyword id="KW-0663">Pyridoxal phosphate</keyword>
<keyword id="KW-1185">Reference proteome</keyword>
<keyword id="KW-0808">Transferase</keyword>
<accession>Q79FW0</accession>
<accession>I6Y8U5</accession>